<accession>Q3V7K4</accession>
<sequence length="242" mass="27018">MSKRRIAPLTFLRRLLLRILAALAVFWGGGIALFSVVPVPFSAVMAERQISAWLGGEFGYVAHSDWVSMADISPWMGLAVITAEDQKFPEHWGFDVPAIEKALAHNERNESRIRGASTLSQQTAKNLFLWDGRSWVRKGLEAGLTLGIETVWSKKRILTVYLNIAEFGDGIFGVEAAAQRYFHKPASRLSVSEAALLAAVLPNPLRYKANAPSGYVRSRQAWIMRQMRQLGGESFMTRNQLN</sequence>
<dbReference type="EC" id="2.4.99.28" evidence="1"/>
<dbReference type="EMBL" id="CP000026">
    <property type="protein sequence ID" value="AAV79018.1"/>
    <property type="molecule type" value="Genomic_DNA"/>
</dbReference>
<dbReference type="RefSeq" id="WP_000044654.1">
    <property type="nucleotide sequence ID" value="NC_006511.1"/>
</dbReference>
<dbReference type="SMR" id="Q3V7K4"/>
<dbReference type="CAZy" id="GT51">
    <property type="family name" value="Glycosyltransferase Family 51"/>
</dbReference>
<dbReference type="KEGG" id="spt:SPA3193"/>
<dbReference type="HOGENOM" id="CLU_006354_1_1_6"/>
<dbReference type="UniPathway" id="UPA00219"/>
<dbReference type="Proteomes" id="UP000008185">
    <property type="component" value="Chromosome"/>
</dbReference>
<dbReference type="GO" id="GO:0009274">
    <property type="term" value="C:peptidoglycan-based cell wall"/>
    <property type="evidence" value="ECO:0007669"/>
    <property type="project" value="InterPro"/>
</dbReference>
<dbReference type="GO" id="GO:0005886">
    <property type="term" value="C:plasma membrane"/>
    <property type="evidence" value="ECO:0007669"/>
    <property type="project" value="UniProtKB-SubCell"/>
</dbReference>
<dbReference type="GO" id="GO:0016763">
    <property type="term" value="F:pentosyltransferase activity"/>
    <property type="evidence" value="ECO:0007669"/>
    <property type="project" value="InterPro"/>
</dbReference>
<dbReference type="GO" id="GO:0008955">
    <property type="term" value="F:peptidoglycan glycosyltransferase activity"/>
    <property type="evidence" value="ECO:0007669"/>
    <property type="project" value="UniProtKB-UniRule"/>
</dbReference>
<dbReference type="GO" id="GO:0071555">
    <property type="term" value="P:cell wall organization"/>
    <property type="evidence" value="ECO:0007669"/>
    <property type="project" value="UniProtKB-KW"/>
</dbReference>
<dbReference type="GO" id="GO:0009252">
    <property type="term" value="P:peptidoglycan biosynthetic process"/>
    <property type="evidence" value="ECO:0007669"/>
    <property type="project" value="UniProtKB-UniRule"/>
</dbReference>
<dbReference type="GO" id="GO:0008360">
    <property type="term" value="P:regulation of cell shape"/>
    <property type="evidence" value="ECO:0007669"/>
    <property type="project" value="UniProtKB-KW"/>
</dbReference>
<dbReference type="Gene3D" id="1.10.3810.10">
    <property type="entry name" value="Biosynthetic peptidoglycan transglycosylase-like"/>
    <property type="match status" value="1"/>
</dbReference>
<dbReference type="HAMAP" id="MF_00766">
    <property type="entry name" value="PGT_MtgA"/>
    <property type="match status" value="1"/>
</dbReference>
<dbReference type="InterPro" id="IPR001264">
    <property type="entry name" value="Glyco_trans_51"/>
</dbReference>
<dbReference type="InterPro" id="IPR023346">
    <property type="entry name" value="Lysozyme-like_dom_sf"/>
</dbReference>
<dbReference type="InterPro" id="IPR036950">
    <property type="entry name" value="PBP_transglycosylase"/>
</dbReference>
<dbReference type="InterPro" id="IPR011812">
    <property type="entry name" value="Pep_trsgly"/>
</dbReference>
<dbReference type="NCBIfam" id="TIGR02070">
    <property type="entry name" value="mono_pep_trsgly"/>
    <property type="match status" value="1"/>
</dbReference>
<dbReference type="PANTHER" id="PTHR30400:SF0">
    <property type="entry name" value="BIOSYNTHETIC PEPTIDOGLYCAN TRANSGLYCOSYLASE"/>
    <property type="match status" value="1"/>
</dbReference>
<dbReference type="PANTHER" id="PTHR30400">
    <property type="entry name" value="MONOFUNCTIONAL BIOSYNTHETIC PEPTIDOGLYCAN TRANSGLYCOSYLASE"/>
    <property type="match status" value="1"/>
</dbReference>
<dbReference type="Pfam" id="PF00912">
    <property type="entry name" value="Transgly"/>
    <property type="match status" value="1"/>
</dbReference>
<dbReference type="SUPFAM" id="SSF53955">
    <property type="entry name" value="Lysozyme-like"/>
    <property type="match status" value="1"/>
</dbReference>
<evidence type="ECO:0000255" key="1">
    <source>
        <dbReference type="HAMAP-Rule" id="MF_00766"/>
    </source>
</evidence>
<reference key="1">
    <citation type="journal article" date="2004" name="Nat. Genet.">
        <title>Comparison of genome degradation in Paratyphi A and Typhi, human-restricted serovars of Salmonella enterica that cause typhoid.</title>
        <authorList>
            <person name="McClelland M."/>
            <person name="Sanderson K.E."/>
            <person name="Clifton S.W."/>
            <person name="Latreille P."/>
            <person name="Porwollik S."/>
            <person name="Sabo A."/>
            <person name="Meyer R."/>
            <person name="Bieri T."/>
            <person name="Ozersky P."/>
            <person name="McLellan M."/>
            <person name="Harkins C.R."/>
            <person name="Wang C."/>
            <person name="Nguyen C."/>
            <person name="Berghoff A."/>
            <person name="Elliott G."/>
            <person name="Kohlberg S."/>
            <person name="Strong C."/>
            <person name="Du F."/>
            <person name="Carter J."/>
            <person name="Kremizki C."/>
            <person name="Layman D."/>
            <person name="Leonard S."/>
            <person name="Sun H."/>
            <person name="Fulton L."/>
            <person name="Nash W."/>
            <person name="Miner T."/>
            <person name="Minx P."/>
            <person name="Delehaunty K."/>
            <person name="Fronick C."/>
            <person name="Magrini V."/>
            <person name="Nhan M."/>
            <person name="Warren W."/>
            <person name="Florea L."/>
            <person name="Spieth J."/>
            <person name="Wilson R.K."/>
        </authorList>
    </citation>
    <scope>NUCLEOTIDE SEQUENCE [LARGE SCALE GENOMIC DNA]</scope>
    <source>
        <strain>ATCC 9150 / SARB42</strain>
    </source>
</reference>
<organism>
    <name type="scientific">Salmonella paratyphi A (strain ATCC 9150 / SARB42)</name>
    <dbReference type="NCBI Taxonomy" id="295319"/>
    <lineage>
        <taxon>Bacteria</taxon>
        <taxon>Pseudomonadati</taxon>
        <taxon>Pseudomonadota</taxon>
        <taxon>Gammaproteobacteria</taxon>
        <taxon>Enterobacterales</taxon>
        <taxon>Enterobacteriaceae</taxon>
        <taxon>Salmonella</taxon>
    </lineage>
</organism>
<comment type="function">
    <text evidence="1">Peptidoglycan polymerase that catalyzes glycan chain elongation from lipid-linked precursors.</text>
</comment>
<comment type="catalytic activity">
    <reaction evidence="1">
        <text>[GlcNAc-(1-&gt;4)-Mur2Ac(oyl-L-Ala-gamma-D-Glu-L-Lys-D-Ala-D-Ala)](n)-di-trans,octa-cis-undecaprenyl diphosphate + beta-D-GlcNAc-(1-&gt;4)-Mur2Ac(oyl-L-Ala-gamma-D-Glu-L-Lys-D-Ala-D-Ala)-di-trans,octa-cis-undecaprenyl diphosphate = [GlcNAc-(1-&gt;4)-Mur2Ac(oyl-L-Ala-gamma-D-Glu-L-Lys-D-Ala-D-Ala)](n+1)-di-trans,octa-cis-undecaprenyl diphosphate + di-trans,octa-cis-undecaprenyl diphosphate + H(+)</text>
        <dbReference type="Rhea" id="RHEA:23708"/>
        <dbReference type="Rhea" id="RHEA-COMP:9602"/>
        <dbReference type="Rhea" id="RHEA-COMP:9603"/>
        <dbReference type="ChEBI" id="CHEBI:15378"/>
        <dbReference type="ChEBI" id="CHEBI:58405"/>
        <dbReference type="ChEBI" id="CHEBI:60033"/>
        <dbReference type="ChEBI" id="CHEBI:78435"/>
        <dbReference type="EC" id="2.4.99.28"/>
    </reaction>
</comment>
<comment type="pathway">
    <text evidence="1">Cell wall biogenesis; peptidoglycan biosynthesis.</text>
</comment>
<comment type="subcellular location">
    <subcellularLocation>
        <location evidence="1">Cell inner membrane</location>
        <topology evidence="1">Single-pass membrane protein</topology>
    </subcellularLocation>
</comment>
<comment type="similarity">
    <text evidence="1">Belongs to the glycosyltransferase 51 family.</text>
</comment>
<gene>
    <name evidence="1" type="primary">mtgA</name>
    <name type="ordered locus">SPA3193</name>
</gene>
<feature type="chain" id="PRO_0000257691" description="Biosynthetic peptidoglycan transglycosylase">
    <location>
        <begin position="1"/>
        <end position="242"/>
    </location>
</feature>
<feature type="transmembrane region" description="Helical" evidence="1">
    <location>
        <begin position="19"/>
        <end position="39"/>
    </location>
</feature>
<protein>
    <recommendedName>
        <fullName evidence="1">Biosynthetic peptidoglycan transglycosylase</fullName>
        <ecNumber evidence="1">2.4.99.28</ecNumber>
    </recommendedName>
    <alternativeName>
        <fullName evidence="1">Glycan polymerase</fullName>
    </alternativeName>
    <alternativeName>
        <fullName evidence="1">Peptidoglycan glycosyltransferase MtgA</fullName>
        <shortName evidence="1">PGT</shortName>
    </alternativeName>
</protein>
<name>MTGA_SALPA</name>
<proteinExistence type="inferred from homology"/>
<keyword id="KW-0997">Cell inner membrane</keyword>
<keyword id="KW-1003">Cell membrane</keyword>
<keyword id="KW-0133">Cell shape</keyword>
<keyword id="KW-0961">Cell wall biogenesis/degradation</keyword>
<keyword id="KW-0328">Glycosyltransferase</keyword>
<keyword id="KW-0472">Membrane</keyword>
<keyword id="KW-0573">Peptidoglycan synthesis</keyword>
<keyword id="KW-0808">Transferase</keyword>
<keyword id="KW-0812">Transmembrane</keyword>
<keyword id="KW-1133">Transmembrane helix</keyword>